<evidence type="ECO:0000255" key="1">
    <source>
        <dbReference type="HAMAP-Rule" id="MF_01851"/>
    </source>
</evidence>
<feature type="chain" id="PRO_0000348322" description="UPF0637 protein SaurJH9_1166">
    <location>
        <begin position="1"/>
        <end position="204"/>
    </location>
</feature>
<dbReference type="EMBL" id="CP000703">
    <property type="protein sequence ID" value="ABQ48966.1"/>
    <property type="molecule type" value="Genomic_DNA"/>
</dbReference>
<dbReference type="RefSeq" id="WP_000170603.1">
    <property type="nucleotide sequence ID" value="NC_009487.1"/>
</dbReference>
<dbReference type="SMR" id="A5IRZ3"/>
<dbReference type="KEGG" id="saj:SaurJH9_1166"/>
<dbReference type="HOGENOM" id="CLU_096059_0_0_9"/>
<dbReference type="Gene3D" id="3.30.930.20">
    <property type="entry name" value="Protein of unknown function DUF1054"/>
    <property type="match status" value="1"/>
</dbReference>
<dbReference type="HAMAP" id="MF_01851">
    <property type="entry name" value="UPF0637"/>
    <property type="match status" value="1"/>
</dbReference>
<dbReference type="InterPro" id="IPR009403">
    <property type="entry name" value="UPF0637"/>
</dbReference>
<dbReference type="InterPro" id="IPR053707">
    <property type="entry name" value="UPF0637_domain_sf"/>
</dbReference>
<dbReference type="Pfam" id="PF06335">
    <property type="entry name" value="DUF1054"/>
    <property type="match status" value="1"/>
</dbReference>
<dbReference type="PIRSF" id="PIRSF021332">
    <property type="entry name" value="DUF1054"/>
    <property type="match status" value="1"/>
</dbReference>
<dbReference type="SUPFAM" id="SSF142913">
    <property type="entry name" value="YktB/PF0168-like"/>
    <property type="match status" value="1"/>
</dbReference>
<name>Y1166_STAA9</name>
<organism>
    <name type="scientific">Staphylococcus aureus (strain JH9)</name>
    <dbReference type="NCBI Taxonomy" id="359786"/>
    <lineage>
        <taxon>Bacteria</taxon>
        <taxon>Bacillati</taxon>
        <taxon>Bacillota</taxon>
        <taxon>Bacilli</taxon>
        <taxon>Bacillales</taxon>
        <taxon>Staphylococcaceae</taxon>
        <taxon>Staphylococcus</taxon>
    </lineage>
</organism>
<protein>
    <recommendedName>
        <fullName evidence="1">UPF0637 protein SaurJH9_1166</fullName>
    </recommendedName>
</protein>
<sequence>MTKYTFKPKDFKAFNVEGLDARMEALNEYIRPQLHELGEYFSDFFTSQTGETFYPHVAKHARRSVNPPKDTWVAFATSKRGYKMLPHFQIGMFEDQLFVMFGIMHEAKDKATRAKVFERKFKAIQQLPDDYRVCLDHMKPDKPFIKDLTDDDLKEAIQRAINVKKGEFFIARAITPQDKRLKSDKAFIAFLEETFDQFLPFYSA</sequence>
<proteinExistence type="inferred from homology"/>
<reference key="1">
    <citation type="submission" date="2007-05" db="EMBL/GenBank/DDBJ databases">
        <title>Complete sequence of chromosome of Staphylococcus aureus subsp. aureus JH9.</title>
        <authorList>
            <consortium name="US DOE Joint Genome Institute"/>
            <person name="Copeland A."/>
            <person name="Lucas S."/>
            <person name="Lapidus A."/>
            <person name="Barry K."/>
            <person name="Detter J.C."/>
            <person name="Glavina del Rio T."/>
            <person name="Hammon N."/>
            <person name="Israni S."/>
            <person name="Pitluck S."/>
            <person name="Chain P."/>
            <person name="Malfatti S."/>
            <person name="Shin M."/>
            <person name="Vergez L."/>
            <person name="Schmutz J."/>
            <person name="Larimer F."/>
            <person name="Land M."/>
            <person name="Hauser L."/>
            <person name="Kyrpides N."/>
            <person name="Kim E."/>
            <person name="Tomasz A."/>
            <person name="Richardson P."/>
        </authorList>
    </citation>
    <scope>NUCLEOTIDE SEQUENCE [LARGE SCALE GENOMIC DNA]</scope>
    <source>
        <strain>JH9</strain>
    </source>
</reference>
<gene>
    <name type="ordered locus">SaurJH9_1166</name>
</gene>
<comment type="similarity">
    <text evidence="1">Belongs to the UPF0637 family.</text>
</comment>
<accession>A5IRZ3</accession>